<sequence length="286" mass="30431">MDDRDLLEIIRPVCGSDTCSDDCAILTLPCGALVTSTDMLHERSDFPAGMTGWQIGWMSVAVTISDIAAMGAEPLQIVLAIGLDTEERLAEIVLGAQACCDTYGAVYAGGDLDAHSELTIVSTGVGIIRDGEPVRRGGAKPGDIICVTGTLGRAILGLTGDSRFWKDLCEPQPRVREGTVARLAGAHAMMDISDGLAISLYDIAAESHVGMEISSGRIPLPPEADVQVALEAALYGGGDFELLFFISEEKMKNLTIPVTQIGRVSEGLKITMDGMELPKKGYLHHW</sequence>
<reference key="1">
    <citation type="journal article" date="2016" name="Stand. Genomic Sci.">
        <title>Complete genome sequence of Methanospirillum hungatei type strain JF1.</title>
        <authorList>
            <person name="Gunsalus R.P."/>
            <person name="Cook L.E."/>
            <person name="Crable B."/>
            <person name="Rohlin L."/>
            <person name="McDonald E."/>
            <person name="Mouttaki H."/>
            <person name="Sieber J.R."/>
            <person name="Poweleit N."/>
            <person name="Zhou H."/>
            <person name="Lapidus A.L."/>
            <person name="Daligault H.E."/>
            <person name="Land M."/>
            <person name="Gilna P."/>
            <person name="Ivanova N."/>
            <person name="Kyrpides N."/>
            <person name="Culley D.E."/>
            <person name="McInerney M.J."/>
        </authorList>
    </citation>
    <scope>NUCLEOTIDE SEQUENCE [LARGE SCALE GENOMIC DNA]</scope>
    <source>
        <strain>ATCC 27890 / DSM 864 / NBRC 100397 / JF-1</strain>
    </source>
</reference>
<gene>
    <name evidence="1" type="primary">thiL</name>
    <name type="ordered locus">Mhun_2605</name>
</gene>
<protein>
    <recommendedName>
        <fullName evidence="1">Thiamine-monophosphate kinase</fullName>
        <shortName evidence="1">TMP kinase</shortName>
        <shortName evidence="1">Thiamine-phosphate kinase</shortName>
        <ecNumber evidence="1">2.7.4.16</ecNumber>
    </recommendedName>
</protein>
<dbReference type="EC" id="2.7.4.16" evidence="1"/>
<dbReference type="EMBL" id="CP000254">
    <property type="protein sequence ID" value="ABD42302.1"/>
    <property type="molecule type" value="Genomic_DNA"/>
</dbReference>
<dbReference type="RefSeq" id="WP_011449559.1">
    <property type="nucleotide sequence ID" value="NC_007796.1"/>
</dbReference>
<dbReference type="SMR" id="Q2FSV9"/>
<dbReference type="FunCoup" id="Q2FSV9">
    <property type="interactions" value="92"/>
</dbReference>
<dbReference type="STRING" id="323259.Mhun_2605"/>
<dbReference type="EnsemblBacteria" id="ABD42302">
    <property type="protein sequence ID" value="ABD42302"/>
    <property type="gene ID" value="Mhun_2605"/>
</dbReference>
<dbReference type="GeneID" id="3923648"/>
<dbReference type="KEGG" id="mhu:Mhun_2605"/>
<dbReference type="eggNOG" id="arCOG00638">
    <property type="taxonomic scope" value="Archaea"/>
</dbReference>
<dbReference type="HOGENOM" id="CLU_046964_2_0_2"/>
<dbReference type="InParanoid" id="Q2FSV9"/>
<dbReference type="OrthoDB" id="45909at2157"/>
<dbReference type="UniPathway" id="UPA00060">
    <property type="reaction ID" value="UER00142"/>
</dbReference>
<dbReference type="Proteomes" id="UP000001941">
    <property type="component" value="Chromosome"/>
</dbReference>
<dbReference type="GO" id="GO:0005524">
    <property type="term" value="F:ATP binding"/>
    <property type="evidence" value="ECO:0007669"/>
    <property type="project" value="UniProtKB-UniRule"/>
</dbReference>
<dbReference type="GO" id="GO:0000287">
    <property type="term" value="F:magnesium ion binding"/>
    <property type="evidence" value="ECO:0007669"/>
    <property type="project" value="UniProtKB-UniRule"/>
</dbReference>
<dbReference type="GO" id="GO:0009030">
    <property type="term" value="F:thiamine-phosphate kinase activity"/>
    <property type="evidence" value="ECO:0007669"/>
    <property type="project" value="UniProtKB-UniRule"/>
</dbReference>
<dbReference type="GO" id="GO:0009228">
    <property type="term" value="P:thiamine biosynthetic process"/>
    <property type="evidence" value="ECO:0007669"/>
    <property type="project" value="UniProtKB-KW"/>
</dbReference>
<dbReference type="GO" id="GO:0009229">
    <property type="term" value="P:thiamine diphosphate biosynthetic process"/>
    <property type="evidence" value="ECO:0007669"/>
    <property type="project" value="UniProtKB-UniRule"/>
</dbReference>
<dbReference type="CDD" id="cd02194">
    <property type="entry name" value="ThiL"/>
    <property type="match status" value="1"/>
</dbReference>
<dbReference type="Gene3D" id="3.90.650.10">
    <property type="entry name" value="PurM-like C-terminal domain"/>
    <property type="match status" value="1"/>
</dbReference>
<dbReference type="Gene3D" id="3.30.1330.10">
    <property type="entry name" value="PurM-like, N-terminal domain"/>
    <property type="match status" value="1"/>
</dbReference>
<dbReference type="HAMAP" id="MF_02128">
    <property type="entry name" value="TMP_kinase"/>
    <property type="match status" value="1"/>
</dbReference>
<dbReference type="InterPro" id="IPR036676">
    <property type="entry name" value="PurM-like_C_sf"/>
</dbReference>
<dbReference type="InterPro" id="IPR016188">
    <property type="entry name" value="PurM-like_N"/>
</dbReference>
<dbReference type="InterPro" id="IPR036921">
    <property type="entry name" value="PurM-like_N_sf"/>
</dbReference>
<dbReference type="InterPro" id="IPR006283">
    <property type="entry name" value="ThiL-like"/>
</dbReference>
<dbReference type="NCBIfam" id="TIGR01379">
    <property type="entry name" value="thiL"/>
    <property type="match status" value="1"/>
</dbReference>
<dbReference type="PANTHER" id="PTHR30270">
    <property type="entry name" value="THIAMINE-MONOPHOSPHATE KINASE"/>
    <property type="match status" value="1"/>
</dbReference>
<dbReference type="PANTHER" id="PTHR30270:SF3">
    <property type="entry name" value="THIAMINE-MONOPHOSPHATE KINASE"/>
    <property type="match status" value="1"/>
</dbReference>
<dbReference type="Pfam" id="PF00586">
    <property type="entry name" value="AIRS"/>
    <property type="match status" value="1"/>
</dbReference>
<dbReference type="PIRSF" id="PIRSF005303">
    <property type="entry name" value="Thiam_monoph_kin"/>
    <property type="match status" value="1"/>
</dbReference>
<dbReference type="SUPFAM" id="SSF56042">
    <property type="entry name" value="PurM C-terminal domain-like"/>
    <property type="match status" value="1"/>
</dbReference>
<dbReference type="SUPFAM" id="SSF55326">
    <property type="entry name" value="PurM N-terminal domain-like"/>
    <property type="match status" value="1"/>
</dbReference>
<feature type="chain" id="PRO_0000415639" description="Thiamine-monophosphate kinase">
    <location>
        <begin position="1"/>
        <end position="286"/>
    </location>
</feature>
<feature type="binding site" evidence="1">
    <location>
        <position position="22"/>
    </location>
    <ligand>
        <name>Mg(2+)</name>
        <dbReference type="ChEBI" id="CHEBI:18420"/>
        <label>3</label>
    </ligand>
</feature>
<feature type="binding site" evidence="1">
    <location>
        <position position="22"/>
    </location>
    <ligand>
        <name>Mg(2+)</name>
        <dbReference type="ChEBI" id="CHEBI:18420"/>
        <label>4</label>
    </ligand>
</feature>
<feature type="binding site" evidence="1">
    <location>
        <position position="36"/>
    </location>
    <ligand>
        <name>Mg(2+)</name>
        <dbReference type="ChEBI" id="CHEBI:18420"/>
        <label>4</label>
    </ligand>
</feature>
<feature type="binding site" evidence="1">
    <location>
        <position position="37"/>
    </location>
    <ligand>
        <name>Mg(2+)</name>
        <dbReference type="ChEBI" id="CHEBI:18420"/>
        <label>1</label>
    </ligand>
</feature>
<feature type="binding site" evidence="1">
    <location>
        <position position="38"/>
    </location>
    <ligand>
        <name>Mg(2+)</name>
        <dbReference type="ChEBI" id="CHEBI:18420"/>
        <label>1</label>
    </ligand>
</feature>
<feature type="binding site" evidence="1">
    <location>
        <position position="38"/>
    </location>
    <ligand>
        <name>Mg(2+)</name>
        <dbReference type="ChEBI" id="CHEBI:18420"/>
        <label>2</label>
    </ligand>
</feature>
<feature type="binding site" evidence="1">
    <location>
        <position position="45"/>
    </location>
    <ligand>
        <name>substrate</name>
    </ligand>
</feature>
<feature type="binding site" evidence="1">
    <location>
        <position position="66"/>
    </location>
    <ligand>
        <name>Mg(2+)</name>
        <dbReference type="ChEBI" id="CHEBI:18420"/>
        <label>2</label>
    </ligand>
</feature>
<feature type="binding site" evidence="1">
    <location>
        <position position="66"/>
    </location>
    <ligand>
        <name>Mg(2+)</name>
        <dbReference type="ChEBI" id="CHEBI:18420"/>
        <label>3</label>
    </ligand>
</feature>
<feature type="binding site" evidence="1">
    <location>
        <position position="66"/>
    </location>
    <ligand>
        <name>Mg(2+)</name>
        <dbReference type="ChEBI" id="CHEBI:18420"/>
        <label>4</label>
    </ligand>
</feature>
<feature type="binding site" evidence="1">
    <location>
        <begin position="110"/>
        <end position="111"/>
    </location>
    <ligand>
        <name>ATP</name>
        <dbReference type="ChEBI" id="CHEBI:30616"/>
    </ligand>
</feature>
<feature type="binding site" evidence="1">
    <location>
        <position position="111"/>
    </location>
    <ligand>
        <name>Mg(2+)</name>
        <dbReference type="ChEBI" id="CHEBI:18420"/>
        <label>1</label>
    </ligand>
</feature>
<feature type="binding site" evidence="1">
    <location>
        <position position="136"/>
    </location>
    <ligand>
        <name>ATP</name>
        <dbReference type="ChEBI" id="CHEBI:30616"/>
    </ligand>
</feature>
<feature type="binding site" evidence="1">
    <location>
        <position position="191"/>
    </location>
    <ligand>
        <name>Mg(2+)</name>
        <dbReference type="ChEBI" id="CHEBI:18420"/>
        <label>3</label>
    </ligand>
</feature>
<feature type="binding site" evidence="1">
    <location>
        <position position="193"/>
    </location>
    <ligand>
        <name>ATP</name>
        <dbReference type="ChEBI" id="CHEBI:30616"/>
    </ligand>
</feature>
<feature type="binding site" evidence="1">
    <location>
        <position position="194"/>
    </location>
    <ligand>
        <name>Mg(2+)</name>
        <dbReference type="ChEBI" id="CHEBI:18420"/>
        <label>5</label>
    </ligand>
</feature>
<feature type="binding site" evidence="1">
    <location>
        <position position="282"/>
    </location>
    <ligand>
        <name>substrate</name>
    </ligand>
</feature>
<evidence type="ECO:0000255" key="1">
    <source>
        <dbReference type="HAMAP-Rule" id="MF_02128"/>
    </source>
</evidence>
<name>THIL_METHJ</name>
<proteinExistence type="inferred from homology"/>
<keyword id="KW-0067">ATP-binding</keyword>
<keyword id="KW-0418">Kinase</keyword>
<keyword id="KW-0460">Magnesium</keyword>
<keyword id="KW-0479">Metal-binding</keyword>
<keyword id="KW-0547">Nucleotide-binding</keyword>
<keyword id="KW-1185">Reference proteome</keyword>
<keyword id="KW-0784">Thiamine biosynthesis</keyword>
<keyword id="KW-0808">Transferase</keyword>
<organism>
    <name type="scientific">Methanospirillum hungatei JF-1 (strain ATCC 27890 / DSM 864 / NBRC 100397 / JF-1)</name>
    <dbReference type="NCBI Taxonomy" id="323259"/>
    <lineage>
        <taxon>Archaea</taxon>
        <taxon>Methanobacteriati</taxon>
        <taxon>Methanobacteriota</taxon>
        <taxon>Stenosarchaea group</taxon>
        <taxon>Methanomicrobia</taxon>
        <taxon>Methanomicrobiales</taxon>
        <taxon>Methanospirillaceae</taxon>
        <taxon>Methanospirillum</taxon>
    </lineage>
</organism>
<accession>Q2FSV9</accession>
<comment type="function">
    <text evidence="1">Catalyzes the ATP-dependent phosphorylation of thiamine-monophosphate (TMP) to form thiamine-pyrophosphate (TPP), the active form of vitamin B1.</text>
</comment>
<comment type="catalytic activity">
    <reaction evidence="1">
        <text>thiamine phosphate + ATP = thiamine diphosphate + ADP</text>
        <dbReference type="Rhea" id="RHEA:15913"/>
        <dbReference type="ChEBI" id="CHEBI:30616"/>
        <dbReference type="ChEBI" id="CHEBI:37575"/>
        <dbReference type="ChEBI" id="CHEBI:58937"/>
        <dbReference type="ChEBI" id="CHEBI:456216"/>
        <dbReference type="EC" id="2.7.4.16"/>
    </reaction>
</comment>
<comment type="pathway">
    <text evidence="1">Cofactor biosynthesis; thiamine diphosphate biosynthesis; thiamine diphosphate from thiamine phosphate: step 1/1.</text>
</comment>
<comment type="miscellaneous">
    <text evidence="1">Reaction mechanism of ThiL seems to utilize a direct, inline transfer of the gamma-phosphate of ATP to TMP rather than a phosphorylated enzyme intermediate.</text>
</comment>
<comment type="similarity">
    <text evidence="1">Belongs to the thiamine-monophosphate kinase family.</text>
</comment>